<proteinExistence type="inferred from homology"/>
<keyword id="KW-0997">Cell inner membrane</keyword>
<keyword id="KW-1003">Cell membrane</keyword>
<keyword id="KW-0472">Membrane</keyword>
<keyword id="KW-0812">Transmembrane</keyword>
<keyword id="KW-1133">Transmembrane helix</keyword>
<accession>B4TQ70</accession>
<gene>
    <name evidence="1" type="primary">yfbV</name>
    <name type="ordered locus">SeSA_A2564</name>
</gene>
<name>YFBV_SALSV</name>
<organism>
    <name type="scientific">Salmonella schwarzengrund (strain CVM19633)</name>
    <dbReference type="NCBI Taxonomy" id="439843"/>
    <lineage>
        <taxon>Bacteria</taxon>
        <taxon>Pseudomonadati</taxon>
        <taxon>Pseudomonadota</taxon>
        <taxon>Gammaproteobacteria</taxon>
        <taxon>Enterobacterales</taxon>
        <taxon>Enterobacteriaceae</taxon>
        <taxon>Salmonella</taxon>
    </lineage>
</organism>
<sequence>MSTPDNRSVNFFSLFRRGQHYAKTWPMEKRLAPVFVENRVIRMTRYAIRFMPPVAVFTLCWQIALGGQLGPAVATALFALSLPMQGLWWLGKRSVTPLPPSILNWFYEVRGKLQEAGQALAPVEGKPDYQALADTLKRAFKQLDKTFLDDL</sequence>
<comment type="subcellular location">
    <subcellularLocation>
        <location evidence="1">Cell inner membrane</location>
        <topology evidence="1">Multi-pass membrane protein</topology>
    </subcellularLocation>
</comment>
<comment type="similarity">
    <text evidence="1">Belongs to the UPF0208 family.</text>
</comment>
<reference key="1">
    <citation type="journal article" date="2011" name="J. Bacteriol.">
        <title>Comparative genomics of 28 Salmonella enterica isolates: evidence for CRISPR-mediated adaptive sublineage evolution.</title>
        <authorList>
            <person name="Fricke W.F."/>
            <person name="Mammel M.K."/>
            <person name="McDermott P.F."/>
            <person name="Tartera C."/>
            <person name="White D.G."/>
            <person name="Leclerc J.E."/>
            <person name="Ravel J."/>
            <person name="Cebula T.A."/>
        </authorList>
    </citation>
    <scope>NUCLEOTIDE SEQUENCE [LARGE SCALE GENOMIC DNA]</scope>
    <source>
        <strain>CVM19633</strain>
    </source>
</reference>
<protein>
    <recommendedName>
        <fullName evidence="1">UPF0208 membrane protein YfbV</fullName>
    </recommendedName>
</protein>
<feature type="chain" id="PRO_1000137002" description="UPF0208 membrane protein YfbV">
    <location>
        <begin position="1"/>
        <end position="151"/>
    </location>
</feature>
<feature type="transmembrane region" description="Helical" evidence="1">
    <location>
        <begin position="46"/>
        <end position="65"/>
    </location>
</feature>
<feature type="transmembrane region" description="Helical" evidence="1">
    <location>
        <begin position="69"/>
        <end position="91"/>
    </location>
</feature>
<evidence type="ECO:0000255" key="1">
    <source>
        <dbReference type="HAMAP-Rule" id="MF_01101"/>
    </source>
</evidence>
<dbReference type="EMBL" id="CP001127">
    <property type="protein sequence ID" value="ACF92691.1"/>
    <property type="molecule type" value="Genomic_DNA"/>
</dbReference>
<dbReference type="RefSeq" id="WP_000106617.1">
    <property type="nucleotide sequence ID" value="NC_011094.1"/>
</dbReference>
<dbReference type="KEGG" id="sew:SeSA_A2564"/>
<dbReference type="HOGENOM" id="CLU_128746_0_0_6"/>
<dbReference type="Proteomes" id="UP000001865">
    <property type="component" value="Chromosome"/>
</dbReference>
<dbReference type="GO" id="GO:0005886">
    <property type="term" value="C:plasma membrane"/>
    <property type="evidence" value="ECO:0007669"/>
    <property type="project" value="UniProtKB-SubCell"/>
</dbReference>
<dbReference type="HAMAP" id="MF_01101">
    <property type="entry name" value="UPF0208"/>
    <property type="match status" value="1"/>
</dbReference>
<dbReference type="InterPro" id="IPR007334">
    <property type="entry name" value="UPF0208"/>
</dbReference>
<dbReference type="NCBIfam" id="NF002493">
    <property type="entry name" value="PRK01816.1"/>
    <property type="match status" value="1"/>
</dbReference>
<dbReference type="Pfam" id="PF04217">
    <property type="entry name" value="DUF412"/>
    <property type="match status" value="1"/>
</dbReference>